<comment type="function">
    <text evidence="1">Catalyzes the rearrangement of 1-deoxy-D-xylulose 5-phosphate (DXP) to produce the thiazole phosphate moiety of thiamine. Sulfur is provided by the thiocarboxylate moiety of the carrier protein ThiS. In vitro, sulfur can be provided by H(2)S.</text>
</comment>
<comment type="catalytic activity">
    <reaction evidence="1">
        <text>[ThiS sulfur-carrier protein]-C-terminal-Gly-aminoethanethioate + 2-iminoacetate + 1-deoxy-D-xylulose 5-phosphate = [ThiS sulfur-carrier protein]-C-terminal Gly-Gly + 2-[(2R,5Z)-2-carboxy-4-methylthiazol-5(2H)-ylidene]ethyl phosphate + 2 H2O + H(+)</text>
        <dbReference type="Rhea" id="RHEA:26297"/>
        <dbReference type="Rhea" id="RHEA-COMP:12909"/>
        <dbReference type="Rhea" id="RHEA-COMP:19908"/>
        <dbReference type="ChEBI" id="CHEBI:15377"/>
        <dbReference type="ChEBI" id="CHEBI:15378"/>
        <dbReference type="ChEBI" id="CHEBI:57792"/>
        <dbReference type="ChEBI" id="CHEBI:62899"/>
        <dbReference type="ChEBI" id="CHEBI:77846"/>
        <dbReference type="ChEBI" id="CHEBI:90778"/>
        <dbReference type="ChEBI" id="CHEBI:232372"/>
        <dbReference type="EC" id="2.8.1.10"/>
    </reaction>
</comment>
<comment type="pathway">
    <text evidence="1">Cofactor biosynthesis; thiamine diphosphate biosynthesis.</text>
</comment>
<comment type="subunit">
    <text evidence="1">Homotetramer. Forms heterodimers with either ThiH or ThiS.</text>
</comment>
<comment type="subcellular location">
    <subcellularLocation>
        <location evidence="1">Cytoplasm</location>
    </subcellularLocation>
</comment>
<comment type="similarity">
    <text evidence="1">Belongs to the ThiG family.</text>
</comment>
<name>THIG_VIBPA</name>
<gene>
    <name evidence="1" type="primary">thiG</name>
    <name type="ordered locus">VP3023</name>
</gene>
<keyword id="KW-0963">Cytoplasm</keyword>
<keyword id="KW-0704">Schiff base</keyword>
<keyword id="KW-0784">Thiamine biosynthesis</keyword>
<keyword id="KW-0808">Transferase</keyword>
<accession>Q87KF4</accession>
<sequence>MLKIGDKEFKSRLFTGTGKFSNSHLMAEAIQVSGSQLATMALKRVDVHDQQDDILQPLIHAGVNLLPNTSGAKNAKDAVFAAQLAREALGTNWVKLEIHPDPKYLMPDPIETLAAAEQLVRDGFIVLPYCHADPVLCKRLEEVGCAAVMPLGAPIGSNKGIASHDFLEIIIDQANVPVVVDAGIGAPSHAARAMEMGADAVLVNTAIAAASNPVAMAKAFKMAVESGRMAYKAGLAGKVSHAVASSPLTAFLDEL</sequence>
<reference key="1">
    <citation type="journal article" date="2003" name="Lancet">
        <title>Genome sequence of Vibrio parahaemolyticus: a pathogenic mechanism distinct from that of V. cholerae.</title>
        <authorList>
            <person name="Makino K."/>
            <person name="Oshima K."/>
            <person name="Kurokawa K."/>
            <person name="Yokoyama K."/>
            <person name="Uda T."/>
            <person name="Tagomori K."/>
            <person name="Iijima Y."/>
            <person name="Najima M."/>
            <person name="Nakano M."/>
            <person name="Yamashita A."/>
            <person name="Kubota Y."/>
            <person name="Kimura S."/>
            <person name="Yasunaga T."/>
            <person name="Honda T."/>
            <person name="Shinagawa H."/>
            <person name="Hattori M."/>
            <person name="Iida T."/>
        </authorList>
    </citation>
    <scope>NUCLEOTIDE SEQUENCE [LARGE SCALE GENOMIC DNA]</scope>
    <source>
        <strain>RIMD 2210633</strain>
    </source>
</reference>
<evidence type="ECO:0000255" key="1">
    <source>
        <dbReference type="HAMAP-Rule" id="MF_00443"/>
    </source>
</evidence>
<proteinExistence type="inferred from homology"/>
<protein>
    <recommendedName>
        <fullName evidence="1">Thiazole synthase</fullName>
        <ecNumber evidence="1">2.8.1.10</ecNumber>
    </recommendedName>
</protein>
<feature type="chain" id="PRO_0000162872" description="Thiazole synthase">
    <location>
        <begin position="1"/>
        <end position="255"/>
    </location>
</feature>
<feature type="active site" description="Schiff-base intermediate with DXP" evidence="1">
    <location>
        <position position="95"/>
    </location>
</feature>
<feature type="binding site" evidence="1">
    <location>
        <position position="156"/>
    </location>
    <ligand>
        <name>1-deoxy-D-xylulose 5-phosphate</name>
        <dbReference type="ChEBI" id="CHEBI:57792"/>
    </ligand>
</feature>
<feature type="binding site" evidence="1">
    <location>
        <begin position="182"/>
        <end position="183"/>
    </location>
    <ligand>
        <name>1-deoxy-D-xylulose 5-phosphate</name>
        <dbReference type="ChEBI" id="CHEBI:57792"/>
    </ligand>
</feature>
<feature type="binding site" evidence="1">
    <location>
        <begin position="204"/>
        <end position="205"/>
    </location>
    <ligand>
        <name>1-deoxy-D-xylulose 5-phosphate</name>
        <dbReference type="ChEBI" id="CHEBI:57792"/>
    </ligand>
</feature>
<dbReference type="EC" id="2.8.1.10" evidence="1"/>
<dbReference type="EMBL" id="BA000031">
    <property type="protein sequence ID" value="BAC61286.1"/>
    <property type="molecule type" value="Genomic_DNA"/>
</dbReference>
<dbReference type="RefSeq" id="NP_799402.1">
    <property type="nucleotide sequence ID" value="NC_004603.1"/>
</dbReference>
<dbReference type="RefSeq" id="WP_005480959.1">
    <property type="nucleotide sequence ID" value="NC_004603.1"/>
</dbReference>
<dbReference type="SMR" id="Q87KF4"/>
<dbReference type="GeneID" id="1190615"/>
<dbReference type="KEGG" id="vpa:VP3023"/>
<dbReference type="PATRIC" id="fig|223926.6.peg.2906"/>
<dbReference type="eggNOG" id="COG2022">
    <property type="taxonomic scope" value="Bacteria"/>
</dbReference>
<dbReference type="HOGENOM" id="CLU_062233_1_0_6"/>
<dbReference type="UniPathway" id="UPA00060"/>
<dbReference type="Proteomes" id="UP000002493">
    <property type="component" value="Chromosome 1"/>
</dbReference>
<dbReference type="GO" id="GO:0005737">
    <property type="term" value="C:cytoplasm"/>
    <property type="evidence" value="ECO:0007669"/>
    <property type="project" value="UniProtKB-SubCell"/>
</dbReference>
<dbReference type="GO" id="GO:1990107">
    <property type="term" value="F:thiazole synthase activity"/>
    <property type="evidence" value="ECO:0007669"/>
    <property type="project" value="UniProtKB-EC"/>
</dbReference>
<dbReference type="GO" id="GO:0009229">
    <property type="term" value="P:thiamine diphosphate biosynthetic process"/>
    <property type="evidence" value="ECO:0007669"/>
    <property type="project" value="UniProtKB-UniRule"/>
</dbReference>
<dbReference type="CDD" id="cd04728">
    <property type="entry name" value="ThiG"/>
    <property type="match status" value="1"/>
</dbReference>
<dbReference type="FunFam" id="3.20.20.70:FF:000049">
    <property type="entry name" value="Thiazole synthase"/>
    <property type="match status" value="1"/>
</dbReference>
<dbReference type="Gene3D" id="3.20.20.70">
    <property type="entry name" value="Aldolase class I"/>
    <property type="match status" value="1"/>
</dbReference>
<dbReference type="HAMAP" id="MF_00443">
    <property type="entry name" value="ThiG"/>
    <property type="match status" value="1"/>
</dbReference>
<dbReference type="InterPro" id="IPR013785">
    <property type="entry name" value="Aldolase_TIM"/>
</dbReference>
<dbReference type="InterPro" id="IPR033983">
    <property type="entry name" value="Thiazole_synthase_ThiG"/>
</dbReference>
<dbReference type="InterPro" id="IPR008867">
    <property type="entry name" value="ThiG"/>
</dbReference>
<dbReference type="PANTHER" id="PTHR34266">
    <property type="entry name" value="THIAZOLE SYNTHASE"/>
    <property type="match status" value="1"/>
</dbReference>
<dbReference type="PANTHER" id="PTHR34266:SF2">
    <property type="entry name" value="THIAZOLE SYNTHASE"/>
    <property type="match status" value="1"/>
</dbReference>
<dbReference type="Pfam" id="PF05690">
    <property type="entry name" value="ThiG"/>
    <property type="match status" value="1"/>
</dbReference>
<dbReference type="SUPFAM" id="SSF110399">
    <property type="entry name" value="ThiG-like"/>
    <property type="match status" value="1"/>
</dbReference>
<organism>
    <name type="scientific">Vibrio parahaemolyticus serotype O3:K6 (strain RIMD 2210633)</name>
    <dbReference type="NCBI Taxonomy" id="223926"/>
    <lineage>
        <taxon>Bacteria</taxon>
        <taxon>Pseudomonadati</taxon>
        <taxon>Pseudomonadota</taxon>
        <taxon>Gammaproteobacteria</taxon>
        <taxon>Vibrionales</taxon>
        <taxon>Vibrionaceae</taxon>
        <taxon>Vibrio</taxon>
    </lineage>
</organism>